<protein>
    <recommendedName>
        <fullName evidence="1">Large ribosomal subunit protein uL1</fullName>
    </recommendedName>
    <alternativeName>
        <fullName evidence="2">50S ribosomal protein L1</fullName>
    </alternativeName>
</protein>
<comment type="function">
    <text evidence="1">Binds directly to 23S rRNA. The L1 stalk is quite mobile in the ribosome, and is involved in E site tRNA release.</text>
</comment>
<comment type="function">
    <text evidence="1">Protein L1 is also a translational repressor protein, it controls the translation of the L11 operon by binding to its mRNA.</text>
</comment>
<comment type="subunit">
    <text evidence="1">Part of the 50S ribosomal subunit.</text>
</comment>
<comment type="similarity">
    <text evidence="1">Belongs to the universal ribosomal protein uL1 family.</text>
</comment>
<evidence type="ECO:0000255" key="1">
    <source>
        <dbReference type="HAMAP-Rule" id="MF_01318"/>
    </source>
</evidence>
<evidence type="ECO:0000305" key="2"/>
<name>RL1_PSEA6</name>
<reference key="1">
    <citation type="submission" date="2006-06" db="EMBL/GenBank/DDBJ databases">
        <title>Complete sequence of Pseudoalteromonas atlantica T6c.</title>
        <authorList>
            <consortium name="US DOE Joint Genome Institute"/>
            <person name="Copeland A."/>
            <person name="Lucas S."/>
            <person name="Lapidus A."/>
            <person name="Barry K."/>
            <person name="Detter J.C."/>
            <person name="Glavina del Rio T."/>
            <person name="Hammon N."/>
            <person name="Israni S."/>
            <person name="Dalin E."/>
            <person name="Tice H."/>
            <person name="Pitluck S."/>
            <person name="Saunders E."/>
            <person name="Brettin T."/>
            <person name="Bruce D."/>
            <person name="Han C."/>
            <person name="Tapia R."/>
            <person name="Gilna P."/>
            <person name="Schmutz J."/>
            <person name="Larimer F."/>
            <person name="Land M."/>
            <person name="Hauser L."/>
            <person name="Kyrpides N."/>
            <person name="Kim E."/>
            <person name="Karls A.C."/>
            <person name="Bartlett D."/>
            <person name="Higgins B.P."/>
            <person name="Richardson P."/>
        </authorList>
    </citation>
    <scope>NUCLEOTIDE SEQUENCE [LARGE SCALE GENOMIC DNA]</scope>
    <source>
        <strain>T6c / ATCC BAA-1087</strain>
    </source>
</reference>
<feature type="chain" id="PRO_0000308075" description="Large ribosomal subunit protein uL1">
    <location>
        <begin position="1"/>
        <end position="233"/>
    </location>
</feature>
<gene>
    <name evidence="1" type="primary">rplA</name>
    <name type="ordered locus">Patl_0595</name>
</gene>
<proteinExistence type="inferred from homology"/>
<dbReference type="EMBL" id="CP000388">
    <property type="protein sequence ID" value="ABG39124.1"/>
    <property type="molecule type" value="Genomic_DNA"/>
</dbReference>
<dbReference type="RefSeq" id="WP_006992804.1">
    <property type="nucleotide sequence ID" value="NC_008228.1"/>
</dbReference>
<dbReference type="SMR" id="Q15YB4"/>
<dbReference type="STRING" id="342610.Patl_0595"/>
<dbReference type="KEGG" id="pat:Patl_0595"/>
<dbReference type="eggNOG" id="COG0081">
    <property type="taxonomic scope" value="Bacteria"/>
</dbReference>
<dbReference type="HOGENOM" id="CLU_062853_0_0_6"/>
<dbReference type="OrthoDB" id="9803740at2"/>
<dbReference type="Proteomes" id="UP000001981">
    <property type="component" value="Chromosome"/>
</dbReference>
<dbReference type="GO" id="GO:0022625">
    <property type="term" value="C:cytosolic large ribosomal subunit"/>
    <property type="evidence" value="ECO:0007669"/>
    <property type="project" value="TreeGrafter"/>
</dbReference>
<dbReference type="GO" id="GO:0019843">
    <property type="term" value="F:rRNA binding"/>
    <property type="evidence" value="ECO:0007669"/>
    <property type="project" value="UniProtKB-UniRule"/>
</dbReference>
<dbReference type="GO" id="GO:0003735">
    <property type="term" value="F:structural constituent of ribosome"/>
    <property type="evidence" value="ECO:0007669"/>
    <property type="project" value="InterPro"/>
</dbReference>
<dbReference type="GO" id="GO:0000049">
    <property type="term" value="F:tRNA binding"/>
    <property type="evidence" value="ECO:0007669"/>
    <property type="project" value="UniProtKB-KW"/>
</dbReference>
<dbReference type="GO" id="GO:0006417">
    <property type="term" value="P:regulation of translation"/>
    <property type="evidence" value="ECO:0007669"/>
    <property type="project" value="UniProtKB-KW"/>
</dbReference>
<dbReference type="GO" id="GO:0006412">
    <property type="term" value="P:translation"/>
    <property type="evidence" value="ECO:0007669"/>
    <property type="project" value="UniProtKB-UniRule"/>
</dbReference>
<dbReference type="CDD" id="cd00403">
    <property type="entry name" value="Ribosomal_L1"/>
    <property type="match status" value="1"/>
</dbReference>
<dbReference type="FunFam" id="3.40.50.790:FF:000001">
    <property type="entry name" value="50S ribosomal protein L1"/>
    <property type="match status" value="1"/>
</dbReference>
<dbReference type="Gene3D" id="3.30.190.20">
    <property type="match status" value="1"/>
</dbReference>
<dbReference type="Gene3D" id="3.40.50.790">
    <property type="match status" value="1"/>
</dbReference>
<dbReference type="HAMAP" id="MF_01318_B">
    <property type="entry name" value="Ribosomal_uL1_B"/>
    <property type="match status" value="1"/>
</dbReference>
<dbReference type="InterPro" id="IPR005878">
    <property type="entry name" value="Ribosom_uL1_bac-type"/>
</dbReference>
<dbReference type="InterPro" id="IPR002143">
    <property type="entry name" value="Ribosomal_uL1"/>
</dbReference>
<dbReference type="InterPro" id="IPR023674">
    <property type="entry name" value="Ribosomal_uL1-like"/>
</dbReference>
<dbReference type="InterPro" id="IPR028364">
    <property type="entry name" value="Ribosomal_uL1/biogenesis"/>
</dbReference>
<dbReference type="InterPro" id="IPR016095">
    <property type="entry name" value="Ribosomal_uL1_3-a/b-sand"/>
</dbReference>
<dbReference type="InterPro" id="IPR023673">
    <property type="entry name" value="Ribosomal_uL1_CS"/>
</dbReference>
<dbReference type="NCBIfam" id="TIGR01169">
    <property type="entry name" value="rplA_bact"/>
    <property type="match status" value="1"/>
</dbReference>
<dbReference type="PANTHER" id="PTHR36427">
    <property type="entry name" value="54S RIBOSOMAL PROTEIN L1, MITOCHONDRIAL"/>
    <property type="match status" value="1"/>
</dbReference>
<dbReference type="PANTHER" id="PTHR36427:SF3">
    <property type="entry name" value="LARGE RIBOSOMAL SUBUNIT PROTEIN UL1M"/>
    <property type="match status" value="1"/>
</dbReference>
<dbReference type="Pfam" id="PF00687">
    <property type="entry name" value="Ribosomal_L1"/>
    <property type="match status" value="1"/>
</dbReference>
<dbReference type="PIRSF" id="PIRSF002155">
    <property type="entry name" value="Ribosomal_L1"/>
    <property type="match status" value="1"/>
</dbReference>
<dbReference type="SUPFAM" id="SSF56808">
    <property type="entry name" value="Ribosomal protein L1"/>
    <property type="match status" value="1"/>
</dbReference>
<dbReference type="PROSITE" id="PS01199">
    <property type="entry name" value="RIBOSOMAL_L1"/>
    <property type="match status" value="1"/>
</dbReference>
<organism>
    <name type="scientific">Pseudoalteromonas atlantica (strain T6c / ATCC BAA-1087)</name>
    <dbReference type="NCBI Taxonomy" id="3042615"/>
    <lineage>
        <taxon>Bacteria</taxon>
        <taxon>Pseudomonadati</taxon>
        <taxon>Pseudomonadota</taxon>
        <taxon>Gammaproteobacteria</taxon>
        <taxon>Alteromonadales</taxon>
        <taxon>Alteromonadaceae</taxon>
        <taxon>Paraglaciecola</taxon>
    </lineage>
</organism>
<keyword id="KW-0678">Repressor</keyword>
<keyword id="KW-0687">Ribonucleoprotein</keyword>
<keyword id="KW-0689">Ribosomal protein</keyword>
<keyword id="KW-0694">RNA-binding</keyword>
<keyword id="KW-0699">rRNA-binding</keyword>
<keyword id="KW-0810">Translation regulation</keyword>
<keyword id="KW-0820">tRNA-binding</keyword>
<sequence>MAKLTKRARLVRDKVEATKEYDFNEAVALLKELATAKFAESVDVAVNLGIDARKSDQNVRGATVLPNGTGKEVRVAVFTQGANAEAAKEAGADIVGMEDLAEQVKKGEMNFDVVVASPDAMRVVGMLGQILGPRGLMPNPKTGTVTPDVATAVKNAKAGQVRYRNDKNGIIHASIGKIAFESNQIEENLAALIEAVKKAKPSSAKGVYIKKISLSTTMGAGITIDQASLTAAS</sequence>
<accession>Q15YB4</accession>